<name>FMT_BACFN</name>
<proteinExistence type="inferred from homology"/>
<evidence type="ECO:0000255" key="1">
    <source>
        <dbReference type="HAMAP-Rule" id="MF_00182"/>
    </source>
</evidence>
<protein>
    <recommendedName>
        <fullName evidence="1">Methionyl-tRNA formyltransferase</fullName>
        <ecNumber evidence="1">2.1.2.9</ecNumber>
    </recommendedName>
</protein>
<accession>Q5L975</accession>
<feature type="chain" id="PRO_0000082912" description="Methionyl-tRNA formyltransferase">
    <location>
        <begin position="1"/>
        <end position="324"/>
    </location>
</feature>
<feature type="binding site" evidence="1">
    <location>
        <begin position="113"/>
        <end position="116"/>
    </location>
    <ligand>
        <name>(6S)-5,6,7,8-tetrahydrofolate</name>
        <dbReference type="ChEBI" id="CHEBI:57453"/>
    </ligand>
</feature>
<reference key="1">
    <citation type="journal article" date="2005" name="Science">
        <title>Extensive DNA inversions in the B. fragilis genome control variable gene expression.</title>
        <authorList>
            <person name="Cerdeno-Tarraga A.-M."/>
            <person name="Patrick S."/>
            <person name="Crossman L.C."/>
            <person name="Blakely G."/>
            <person name="Abratt V."/>
            <person name="Lennard N."/>
            <person name="Poxton I."/>
            <person name="Duerden B."/>
            <person name="Harris B."/>
            <person name="Quail M.A."/>
            <person name="Barron A."/>
            <person name="Clark L."/>
            <person name="Corton C."/>
            <person name="Doggett J."/>
            <person name="Holden M.T.G."/>
            <person name="Larke N."/>
            <person name="Line A."/>
            <person name="Lord A."/>
            <person name="Norbertczak H."/>
            <person name="Ormond D."/>
            <person name="Price C."/>
            <person name="Rabbinowitsch E."/>
            <person name="Woodward J."/>
            <person name="Barrell B.G."/>
            <person name="Parkhill J."/>
        </authorList>
    </citation>
    <scope>NUCLEOTIDE SEQUENCE [LARGE SCALE GENOMIC DNA]</scope>
    <source>
        <strain>ATCC 25285 / DSM 2151 / CCUG 4856 / JCM 11019 / LMG 10263 / NCTC 9343 / Onslow / VPI 2553 / EN-2</strain>
    </source>
</reference>
<comment type="function">
    <text evidence="1">Attaches a formyl group to the free amino group of methionyl-tRNA(fMet). The formyl group appears to play a dual role in the initiator identity of N-formylmethionyl-tRNA by promoting its recognition by IF2 and preventing the misappropriation of this tRNA by the elongation apparatus.</text>
</comment>
<comment type="catalytic activity">
    <reaction evidence="1">
        <text>L-methionyl-tRNA(fMet) + (6R)-10-formyltetrahydrofolate = N-formyl-L-methionyl-tRNA(fMet) + (6S)-5,6,7,8-tetrahydrofolate + H(+)</text>
        <dbReference type="Rhea" id="RHEA:24380"/>
        <dbReference type="Rhea" id="RHEA-COMP:9952"/>
        <dbReference type="Rhea" id="RHEA-COMP:9953"/>
        <dbReference type="ChEBI" id="CHEBI:15378"/>
        <dbReference type="ChEBI" id="CHEBI:57453"/>
        <dbReference type="ChEBI" id="CHEBI:78530"/>
        <dbReference type="ChEBI" id="CHEBI:78844"/>
        <dbReference type="ChEBI" id="CHEBI:195366"/>
        <dbReference type="EC" id="2.1.2.9"/>
    </reaction>
</comment>
<comment type="similarity">
    <text evidence="1">Belongs to the Fmt family.</text>
</comment>
<gene>
    <name evidence="1" type="primary">fmt</name>
    <name type="ordered locus">BF3673</name>
</gene>
<keyword id="KW-0648">Protein biosynthesis</keyword>
<keyword id="KW-0808">Transferase</keyword>
<dbReference type="EC" id="2.1.2.9" evidence="1"/>
<dbReference type="EMBL" id="CR626927">
    <property type="protein sequence ID" value="CAH09355.1"/>
    <property type="molecule type" value="Genomic_DNA"/>
</dbReference>
<dbReference type="RefSeq" id="WP_008770001.1">
    <property type="nucleotide sequence ID" value="NZ_UFTH01000001.1"/>
</dbReference>
<dbReference type="SMR" id="Q5L975"/>
<dbReference type="PaxDb" id="272559-BF9343_3574"/>
<dbReference type="GeneID" id="60366252"/>
<dbReference type="KEGG" id="bfs:BF9343_3574"/>
<dbReference type="eggNOG" id="COG0223">
    <property type="taxonomic scope" value="Bacteria"/>
</dbReference>
<dbReference type="HOGENOM" id="CLU_033347_1_1_10"/>
<dbReference type="Proteomes" id="UP000006731">
    <property type="component" value="Chromosome"/>
</dbReference>
<dbReference type="GO" id="GO:0005829">
    <property type="term" value="C:cytosol"/>
    <property type="evidence" value="ECO:0007669"/>
    <property type="project" value="TreeGrafter"/>
</dbReference>
<dbReference type="GO" id="GO:0004479">
    <property type="term" value="F:methionyl-tRNA formyltransferase activity"/>
    <property type="evidence" value="ECO:0007669"/>
    <property type="project" value="UniProtKB-UniRule"/>
</dbReference>
<dbReference type="CDD" id="cd08646">
    <property type="entry name" value="FMT_core_Met-tRNA-FMT_N"/>
    <property type="match status" value="1"/>
</dbReference>
<dbReference type="CDD" id="cd08704">
    <property type="entry name" value="Met_tRNA_FMT_C"/>
    <property type="match status" value="1"/>
</dbReference>
<dbReference type="Gene3D" id="3.40.50.12230">
    <property type="match status" value="1"/>
</dbReference>
<dbReference type="HAMAP" id="MF_00182">
    <property type="entry name" value="Formyl_trans"/>
    <property type="match status" value="1"/>
</dbReference>
<dbReference type="InterPro" id="IPR005794">
    <property type="entry name" value="Fmt"/>
</dbReference>
<dbReference type="InterPro" id="IPR005793">
    <property type="entry name" value="Formyl_trans_C"/>
</dbReference>
<dbReference type="InterPro" id="IPR002376">
    <property type="entry name" value="Formyl_transf_N"/>
</dbReference>
<dbReference type="InterPro" id="IPR036477">
    <property type="entry name" value="Formyl_transf_N_sf"/>
</dbReference>
<dbReference type="InterPro" id="IPR011034">
    <property type="entry name" value="Formyl_transferase-like_C_sf"/>
</dbReference>
<dbReference type="InterPro" id="IPR044135">
    <property type="entry name" value="Met-tRNA-FMT_C"/>
</dbReference>
<dbReference type="InterPro" id="IPR041711">
    <property type="entry name" value="Met-tRNA-FMT_N"/>
</dbReference>
<dbReference type="NCBIfam" id="TIGR00460">
    <property type="entry name" value="fmt"/>
    <property type="match status" value="1"/>
</dbReference>
<dbReference type="PANTHER" id="PTHR11138">
    <property type="entry name" value="METHIONYL-TRNA FORMYLTRANSFERASE"/>
    <property type="match status" value="1"/>
</dbReference>
<dbReference type="PANTHER" id="PTHR11138:SF5">
    <property type="entry name" value="METHIONYL-TRNA FORMYLTRANSFERASE, MITOCHONDRIAL"/>
    <property type="match status" value="1"/>
</dbReference>
<dbReference type="Pfam" id="PF02911">
    <property type="entry name" value="Formyl_trans_C"/>
    <property type="match status" value="1"/>
</dbReference>
<dbReference type="Pfam" id="PF00551">
    <property type="entry name" value="Formyl_trans_N"/>
    <property type="match status" value="1"/>
</dbReference>
<dbReference type="SUPFAM" id="SSF50486">
    <property type="entry name" value="FMT C-terminal domain-like"/>
    <property type="match status" value="1"/>
</dbReference>
<dbReference type="SUPFAM" id="SSF53328">
    <property type="entry name" value="Formyltransferase"/>
    <property type="match status" value="1"/>
</dbReference>
<sequence length="324" mass="36389">MKKEDLRIVYMGTPDFAVEALQCLVEGGYNVVGVITMPDKPAGRGHKIQYSPVKQYALDHQLPLLQPEKLKDEEFIQALREWKADLQIVVAFRMLPEVVWNMPRLGTFNLHASLLPQYRGAAPINWAVINGDTETGITTFFLKHEIDTGEVIQQVRIPIADTDNVEIVHDKLMHLGGRLVIETVDAILEGKVKSIPQEEMAVAGELRPAPKIFKETCRIDWNQPVKRVYDFIRGLSPYPAAWSELVNPEGEAVVVKIFESEKLPKVHTLAPGSIVTDGKNFLRVAVPDGFVNVLSLQLPGKKRLKTDELLRGFHLTEAFKMKAV</sequence>
<organism>
    <name type="scientific">Bacteroides fragilis (strain ATCC 25285 / DSM 2151 / CCUG 4856 / JCM 11019 / LMG 10263 / NCTC 9343 / Onslow / VPI 2553 / EN-2)</name>
    <dbReference type="NCBI Taxonomy" id="272559"/>
    <lineage>
        <taxon>Bacteria</taxon>
        <taxon>Pseudomonadati</taxon>
        <taxon>Bacteroidota</taxon>
        <taxon>Bacteroidia</taxon>
        <taxon>Bacteroidales</taxon>
        <taxon>Bacteroidaceae</taxon>
        <taxon>Bacteroides</taxon>
    </lineage>
</organism>